<protein>
    <recommendedName>
        <fullName>Protein hunchback</fullName>
    </recommendedName>
</protein>
<reference key="1">
    <citation type="journal article" date="1998" name="Mol. Biol. Evol.">
        <title>Microevolutionary divergence pattern of the segmentation gene hunchback in Drosophila.</title>
        <authorList>
            <person name="Tautz D."/>
            <person name="Nigro L."/>
        </authorList>
    </citation>
    <scope>NUCLEOTIDE SEQUENCE [GENOMIC DNA]</scope>
</reference>
<comment type="function">
    <text evidence="1">Gap class segmentation protein that controls development of head structures.</text>
</comment>
<comment type="subcellular location">
    <subcellularLocation>
        <location evidence="1">Nucleus</location>
    </subcellularLocation>
</comment>
<comment type="similarity">
    <text evidence="4">Belongs to the hunchback C2H2-type zinc-finger protein family.</text>
</comment>
<evidence type="ECO:0000250" key="1"/>
<evidence type="ECO:0000255" key="2">
    <source>
        <dbReference type="PROSITE-ProRule" id="PRU00042"/>
    </source>
</evidence>
<evidence type="ECO:0000256" key="3">
    <source>
        <dbReference type="SAM" id="MobiDB-lite"/>
    </source>
</evidence>
<evidence type="ECO:0000305" key="4"/>
<sequence>MQNWETTATTNYEQHNAWYNSMFAANIKQEPGHHLDGNSVASSPRQSPIPSTNHLEQFLKQQQQHQQQPMDTLCAMTPSPSQNDQNSLQHYDANLQQQLLQQQQYQQHFQAAQQQHHHHHHLMGGFNPLTPPGLPNPMQHFYGGNLRPSPQPTPTSASTIAPVAVATGSSEKLQALTPPMDVTPPKSPAKSSQSNIEPEKEHDQMSNSSEDMKYMAESEDDDTNIRMPIYNSHGKMKNYKCKTCGVVAITKVDFWAHTRTHMKPDKILQCPKCPFVTEFKHHLEYHIRKHKNQKPFQCDKCSYTCVNKSMLNSHRKSHSSVYQYRCADCDYATKYCHSFKLHLRKYGHKPGMVLDEDGTPNPSLVIDVYGTRRGPKSKNGGPIASGGSGSGSRKSNVAAVAPQQQQSQPAQPVATSHLSAALQGFPLVQSNSAPPAASPVLPLPASPAKSVASVEQTPSLPSPANLLPPLASLLQQNRNMAFFPYWNLNLQMLAAQQQAAVLAQLSPRMREQLQQQNQQQSDNEEEDQDDEYERKSVDSAMDLSQGTPVKEDEQQQQPQQPLAMNLKVEEEATPLMSSSNASRRKGRVLKLDTLLQLRSEAMTSPEQLKVPSTPMPTASSPIAGRKPMPEEHCSGTSSADESMERPHVRQANTSASSTASSSGNSSNASSNSNGNSSSNSSSNGTTSAVAAPPSGTPAAAGAIYECKYCDIFFKDAVLYTIHMGYHSCDDVFKCNMCGEKCDGPVGLFVHMARNAHS</sequence>
<feature type="chain" id="PRO_0000046961" description="Protein hunchback">
    <location>
        <begin position="1"/>
        <end position="757"/>
    </location>
</feature>
<feature type="zinc finger region" description="C2H2-type 1" evidence="2">
    <location>
        <begin position="239"/>
        <end position="261"/>
    </location>
</feature>
<feature type="zinc finger region" description="C2H2-type 2" evidence="2">
    <location>
        <begin position="268"/>
        <end position="290"/>
    </location>
</feature>
<feature type="zinc finger region" description="C2H2-type 3" evidence="2">
    <location>
        <begin position="296"/>
        <end position="318"/>
    </location>
</feature>
<feature type="zinc finger region" description="C2H2-type 4" evidence="2">
    <location>
        <begin position="324"/>
        <end position="348"/>
    </location>
</feature>
<feature type="zinc finger region" description="C2H2-type 5" evidence="2">
    <location>
        <begin position="704"/>
        <end position="726"/>
    </location>
</feature>
<feature type="zinc finger region" description="C2H2-type 6" evidence="2">
    <location>
        <begin position="732"/>
        <end position="756"/>
    </location>
</feature>
<feature type="region of interest" description="Disordered" evidence="3">
    <location>
        <begin position="30"/>
        <end position="51"/>
    </location>
</feature>
<feature type="region of interest" description="Disordered" evidence="3">
    <location>
        <begin position="171"/>
        <end position="213"/>
    </location>
</feature>
<feature type="region of interest" description="Disordered" evidence="3">
    <location>
        <begin position="367"/>
        <end position="416"/>
    </location>
</feature>
<feature type="region of interest" description="Disordered" evidence="3">
    <location>
        <begin position="511"/>
        <end position="535"/>
    </location>
</feature>
<feature type="region of interest" description="Disordered" evidence="3">
    <location>
        <begin position="602"/>
        <end position="694"/>
    </location>
</feature>
<feature type="compositionally biased region" description="Polar residues" evidence="3">
    <location>
        <begin position="39"/>
        <end position="51"/>
    </location>
</feature>
<feature type="compositionally biased region" description="Basic and acidic residues" evidence="3">
    <location>
        <begin position="197"/>
        <end position="213"/>
    </location>
</feature>
<feature type="compositionally biased region" description="Low complexity" evidence="3">
    <location>
        <begin position="397"/>
        <end position="414"/>
    </location>
</feature>
<feature type="compositionally biased region" description="Low complexity" evidence="3">
    <location>
        <begin position="512"/>
        <end position="521"/>
    </location>
</feature>
<feature type="compositionally biased region" description="Acidic residues" evidence="3">
    <location>
        <begin position="522"/>
        <end position="531"/>
    </location>
</feature>
<feature type="compositionally biased region" description="Low complexity" evidence="3">
    <location>
        <begin position="651"/>
        <end position="694"/>
    </location>
</feature>
<proteinExistence type="inferred from homology"/>
<gene>
    <name type="primary">hb</name>
</gene>
<accession>O62538</accession>
<organism>
    <name type="scientific">Drosophila sechellia</name>
    <name type="common">Fruit fly</name>
    <dbReference type="NCBI Taxonomy" id="7238"/>
    <lineage>
        <taxon>Eukaryota</taxon>
        <taxon>Metazoa</taxon>
        <taxon>Ecdysozoa</taxon>
        <taxon>Arthropoda</taxon>
        <taxon>Hexapoda</taxon>
        <taxon>Insecta</taxon>
        <taxon>Pterygota</taxon>
        <taxon>Neoptera</taxon>
        <taxon>Endopterygota</taxon>
        <taxon>Diptera</taxon>
        <taxon>Brachycera</taxon>
        <taxon>Muscomorpha</taxon>
        <taxon>Ephydroidea</taxon>
        <taxon>Drosophilidae</taxon>
        <taxon>Drosophila</taxon>
        <taxon>Sophophora</taxon>
    </lineage>
</organism>
<dbReference type="EMBL" id="AJ005374">
    <property type="protein sequence ID" value="CAA06504.1"/>
    <property type="molecule type" value="Genomic_DNA"/>
</dbReference>
<dbReference type="GO" id="GO:0005634">
    <property type="term" value="C:nucleus"/>
    <property type="evidence" value="ECO:0007669"/>
    <property type="project" value="UniProtKB-SubCell"/>
</dbReference>
<dbReference type="GO" id="GO:0000981">
    <property type="term" value="F:DNA-binding transcription factor activity, RNA polymerase II-specific"/>
    <property type="evidence" value="ECO:0007669"/>
    <property type="project" value="EnsemblMetazoa"/>
</dbReference>
<dbReference type="GO" id="GO:0000978">
    <property type="term" value="F:RNA polymerase II cis-regulatory region sequence-specific DNA binding"/>
    <property type="evidence" value="ECO:0007669"/>
    <property type="project" value="EnsemblMetazoa"/>
</dbReference>
<dbReference type="GO" id="GO:0008270">
    <property type="term" value="F:zinc ion binding"/>
    <property type="evidence" value="ECO:0007669"/>
    <property type="project" value="UniProtKB-KW"/>
</dbReference>
<dbReference type="GO" id="GO:0009948">
    <property type="term" value="P:anterior/posterior axis specification"/>
    <property type="evidence" value="ECO:0007669"/>
    <property type="project" value="EnsemblMetazoa"/>
</dbReference>
<dbReference type="GO" id="GO:0048699">
    <property type="term" value="P:generation of neurons"/>
    <property type="evidence" value="ECO:0007669"/>
    <property type="project" value="EnsemblMetazoa"/>
</dbReference>
<dbReference type="GO" id="GO:0000122">
    <property type="term" value="P:negative regulation of transcription by RNA polymerase II"/>
    <property type="evidence" value="ECO:0007669"/>
    <property type="project" value="EnsemblMetazoa"/>
</dbReference>
<dbReference type="GO" id="GO:0045944">
    <property type="term" value="P:positive regulation of transcription by RNA polymerase II"/>
    <property type="evidence" value="ECO:0007669"/>
    <property type="project" value="EnsemblMetazoa"/>
</dbReference>
<dbReference type="GO" id="GO:2000177">
    <property type="term" value="P:regulation of neural precursor cell proliferation"/>
    <property type="evidence" value="ECO:0007669"/>
    <property type="project" value="EnsemblMetazoa"/>
</dbReference>
<dbReference type="GO" id="GO:0050767">
    <property type="term" value="P:regulation of neurogenesis"/>
    <property type="evidence" value="ECO:0007669"/>
    <property type="project" value="EnsemblMetazoa"/>
</dbReference>
<dbReference type="GO" id="GO:0035282">
    <property type="term" value="P:segmentation"/>
    <property type="evidence" value="ECO:0007669"/>
    <property type="project" value="UniProtKB-KW"/>
</dbReference>
<dbReference type="FunFam" id="3.30.160.60:FF:001301">
    <property type="entry name" value="Blast:Protein hunchback"/>
    <property type="match status" value="1"/>
</dbReference>
<dbReference type="FunFam" id="3.30.160.60:FF:001482">
    <property type="entry name" value="Hunchback"/>
    <property type="match status" value="1"/>
</dbReference>
<dbReference type="Gene3D" id="3.30.160.60">
    <property type="entry name" value="Classic Zinc Finger"/>
    <property type="match status" value="3"/>
</dbReference>
<dbReference type="InterPro" id="IPR036236">
    <property type="entry name" value="Znf_C2H2_sf"/>
</dbReference>
<dbReference type="InterPro" id="IPR013087">
    <property type="entry name" value="Znf_C2H2_type"/>
</dbReference>
<dbReference type="PANTHER" id="PTHR24392:SF49">
    <property type="entry name" value="PROTEIN HUNCHBACK"/>
    <property type="match status" value="1"/>
</dbReference>
<dbReference type="PANTHER" id="PTHR24392">
    <property type="entry name" value="ZINC FINGER PROTEIN"/>
    <property type="match status" value="1"/>
</dbReference>
<dbReference type="Pfam" id="PF00096">
    <property type="entry name" value="zf-C2H2"/>
    <property type="match status" value="2"/>
</dbReference>
<dbReference type="SMART" id="SM00355">
    <property type="entry name" value="ZnF_C2H2"/>
    <property type="match status" value="6"/>
</dbReference>
<dbReference type="SUPFAM" id="SSF57667">
    <property type="entry name" value="beta-beta-alpha zinc fingers"/>
    <property type="match status" value="3"/>
</dbReference>
<dbReference type="PROSITE" id="PS00028">
    <property type="entry name" value="ZINC_FINGER_C2H2_1"/>
    <property type="match status" value="3"/>
</dbReference>
<dbReference type="PROSITE" id="PS50157">
    <property type="entry name" value="ZINC_FINGER_C2H2_2"/>
    <property type="match status" value="2"/>
</dbReference>
<keyword id="KW-0217">Developmental protein</keyword>
<keyword id="KW-0238">DNA-binding</keyword>
<keyword id="KW-0302">Gap protein</keyword>
<keyword id="KW-0479">Metal-binding</keyword>
<keyword id="KW-0539">Nucleus</keyword>
<keyword id="KW-0677">Repeat</keyword>
<keyword id="KW-0862">Zinc</keyword>
<keyword id="KW-0863">Zinc-finger</keyword>
<name>HUNB_DROSE</name>